<protein>
    <recommendedName>
        <fullName evidence="8">Xylan O-acetyltransferase 5</fullName>
        <ecNumber evidence="6">2.3.1.-</ecNumber>
    </recommendedName>
    <alternativeName>
        <fullName evidence="7">Protein trichome birefringence-like 13</fullName>
        <shortName evidence="7">OsTBL13</shortName>
    </alternativeName>
</protein>
<sequence>MRIPRRKGGAGPLVGAPSRRAQVAAVFALALLLGVSVLYDSAHIAASLRRHGVGGGGSSGGGGGGGGDGARAYTNTKLSATTEEAEAEAAEVRSPPAQGVESAVEATDRGEAPPEQPVAADSGASSAETPPSLLEQVTETPPPSPSSSSAAAAAAEAQVGGDHGGESCDVYKGRWVYDEANAPLYKESACEFLTEQVTCMRNGRRDDDYQKWRWQPDGCDLPRFDAKLLLEKLRNKRLMFVGDSLNRNQWESMVCLVQSEAPWEKKSLVKNDSLNVFRLEEYNATIEFYWSPFLVESNSDDPNMHSIVDRIIKPTSIAKHAANWEGVDYLIFNTYIWWMNTPEMKILHGGSFSKKPVKYDEMERVAAYRKVLKTWSRWVEKHVDPKRSTVFFMSVSPVHMQSEGWGKPDAIKCFSETQPAINYTKKLEVGTDWDLFSTAHHVTKAMKRVPVHFINITALSEIRKDAHTSVNTLRQGKLLTKEQKANPRKFADCIHWCLPGLPDTWNEFIYGHIVSSPQRRPVEPIENQPQR</sequence>
<proteinExistence type="evidence at protein level"/>
<organism>
    <name type="scientific">Oryza sativa subsp. japonica</name>
    <name type="common">Rice</name>
    <dbReference type="NCBI Taxonomy" id="39947"/>
    <lineage>
        <taxon>Eukaryota</taxon>
        <taxon>Viridiplantae</taxon>
        <taxon>Streptophyta</taxon>
        <taxon>Embryophyta</taxon>
        <taxon>Tracheophyta</taxon>
        <taxon>Spermatophyta</taxon>
        <taxon>Magnoliopsida</taxon>
        <taxon>Liliopsida</taxon>
        <taxon>Poales</taxon>
        <taxon>Poaceae</taxon>
        <taxon>BOP clade</taxon>
        <taxon>Oryzoideae</taxon>
        <taxon>Oryzeae</taxon>
        <taxon>Oryzinae</taxon>
        <taxon>Oryza</taxon>
        <taxon>Oryza sativa</taxon>
    </lineage>
</organism>
<evidence type="ECO:0000250" key="1">
    <source>
        <dbReference type="UniProtKB" id="Q2QYU2"/>
    </source>
</evidence>
<evidence type="ECO:0000250" key="2">
    <source>
        <dbReference type="UniProtKB" id="Q9LY46"/>
    </source>
</evidence>
<evidence type="ECO:0000255" key="3"/>
<evidence type="ECO:0000255" key="4">
    <source>
        <dbReference type="PROSITE-ProRule" id="PRU00498"/>
    </source>
</evidence>
<evidence type="ECO:0000256" key="5">
    <source>
        <dbReference type="SAM" id="MobiDB-lite"/>
    </source>
</evidence>
<evidence type="ECO:0000269" key="6">
    <source>
    </source>
</evidence>
<evidence type="ECO:0000303" key="7">
    <source>
    </source>
</evidence>
<evidence type="ECO:0000303" key="8">
    <source>
    </source>
</evidence>
<evidence type="ECO:0000305" key="9"/>
<evidence type="ECO:0000305" key="10">
    <source>
    </source>
</evidence>
<evidence type="ECO:0000312" key="11">
    <source>
        <dbReference type="EMBL" id="AAV43889.1"/>
    </source>
</evidence>
<evidence type="ECO:0000312" key="12">
    <source>
        <dbReference type="EMBL" id="BAS93559.1"/>
    </source>
</evidence>
<reference key="1">
    <citation type="journal article" date="2018" name="Planta">
        <title>Biochemical characterization of rice xylan O-acetyltransferases.</title>
        <authorList>
            <person name="Zhong R."/>
            <person name="Cui D."/>
            <person name="Dasher R.L."/>
            <person name="Ye Z.H."/>
        </authorList>
    </citation>
    <scope>NUCLEOTIDE SEQUENCE [MRNA]</scope>
    <scope>FUNCTION</scope>
    <scope>CATALYTIC ACTIVITY</scope>
    <scope>BIOPHYSICOCHEMICAL PROPERTIES</scope>
    <scope>TISSUE SPECIFICITY</scope>
</reference>
<reference key="2">
    <citation type="journal article" date="2005" name="Mol. Genet. Genomics">
        <title>A fine physical map of the rice chromosome 5.</title>
        <authorList>
            <person name="Cheng C.-H."/>
            <person name="Chung M.C."/>
            <person name="Liu S.-M."/>
            <person name="Chen S.-K."/>
            <person name="Kao F.Y."/>
            <person name="Lin S.-J."/>
            <person name="Hsiao S.-H."/>
            <person name="Tseng I.C."/>
            <person name="Hsing Y.-I.C."/>
            <person name="Wu H.-P."/>
            <person name="Chen C.-S."/>
            <person name="Shaw J.-F."/>
            <person name="Wu J."/>
            <person name="Matsumoto T."/>
            <person name="Sasaki T."/>
            <person name="Chen H.-C."/>
            <person name="Chow T.-Y."/>
        </authorList>
    </citation>
    <scope>NUCLEOTIDE SEQUENCE [LARGE SCALE GENOMIC DNA]</scope>
    <source>
        <strain>cv. Nipponbare</strain>
    </source>
</reference>
<reference key="3">
    <citation type="journal article" date="2005" name="Nature">
        <title>The map-based sequence of the rice genome.</title>
        <authorList>
            <consortium name="International rice genome sequencing project (IRGSP)"/>
        </authorList>
    </citation>
    <scope>NUCLEOTIDE SEQUENCE [LARGE SCALE GENOMIC DNA]</scope>
    <source>
        <strain>cv. Nipponbare</strain>
    </source>
</reference>
<reference key="4">
    <citation type="journal article" date="2008" name="Nucleic Acids Res.">
        <title>The rice annotation project database (RAP-DB): 2008 update.</title>
        <authorList>
            <consortium name="The rice annotation project (RAP)"/>
        </authorList>
    </citation>
    <scope>GENOME REANNOTATION</scope>
    <source>
        <strain>cv. Nipponbare</strain>
    </source>
</reference>
<reference key="5">
    <citation type="journal article" date="2013" name="Rice">
        <title>Improvement of the Oryza sativa Nipponbare reference genome using next generation sequence and optical map data.</title>
        <authorList>
            <person name="Kawahara Y."/>
            <person name="de la Bastide M."/>
            <person name="Hamilton J.P."/>
            <person name="Kanamori H."/>
            <person name="McCombie W.R."/>
            <person name="Ouyang S."/>
            <person name="Schwartz D.C."/>
            <person name="Tanaka T."/>
            <person name="Wu J."/>
            <person name="Zhou S."/>
            <person name="Childs K.L."/>
            <person name="Davidson R.M."/>
            <person name="Lin H."/>
            <person name="Quesada-Ocampo L."/>
            <person name="Vaillancourt B."/>
            <person name="Sakai H."/>
            <person name="Lee S.S."/>
            <person name="Kim J."/>
            <person name="Numa H."/>
            <person name="Itoh T."/>
            <person name="Buell C.R."/>
            <person name="Matsumoto T."/>
        </authorList>
    </citation>
    <scope>GENOME REANNOTATION</scope>
    <source>
        <strain>cv. Nipponbare</strain>
    </source>
</reference>
<reference key="6">
    <citation type="journal article" date="2017" name="Plant Physiol.">
        <title>Two trichome birefringence-like proteins mediate xylan acetylation, which is essential for leaf blight resistance in rice.</title>
        <authorList>
            <person name="Gao Y."/>
            <person name="He C."/>
            <person name="Zhang D."/>
            <person name="Liu X."/>
            <person name="Xu Z."/>
            <person name="Tian Y."/>
            <person name="Liu X.H."/>
            <person name="Zang S."/>
            <person name="Pauly M."/>
            <person name="Zhou Y."/>
            <person name="Zhang B."/>
        </authorList>
    </citation>
    <scope>GENE FAMILY</scope>
    <scope>NOMENCLATURE</scope>
</reference>
<keyword id="KW-1015">Disulfide bond</keyword>
<keyword id="KW-0325">Glycoprotein</keyword>
<keyword id="KW-0333">Golgi apparatus</keyword>
<keyword id="KW-0472">Membrane</keyword>
<keyword id="KW-1185">Reference proteome</keyword>
<keyword id="KW-0735">Signal-anchor</keyword>
<keyword id="KW-0808">Transferase</keyword>
<keyword id="KW-0812">Transmembrane</keyword>
<keyword id="KW-1133">Transmembrane helix</keyword>
<accession>A0A0P0WL81</accession>
<accession>Q0DIX3</accession>
<accession>Q5W782</accession>
<name>XOAT5_ORYSJ</name>
<feature type="chain" id="PRO_0000454029" description="Xylan O-acetyltransferase 5">
    <location>
        <begin position="1"/>
        <end position="531"/>
    </location>
</feature>
<feature type="topological domain" description="Cytoplasmic" evidence="9">
    <location>
        <begin position="1"/>
        <end position="22"/>
    </location>
</feature>
<feature type="transmembrane region" description="Helical; Signal-anchor for type II membrane protein" evidence="3">
    <location>
        <begin position="23"/>
        <end position="45"/>
    </location>
</feature>
<feature type="topological domain" description="Lumenal" evidence="9">
    <location>
        <begin position="46"/>
        <end position="531"/>
    </location>
</feature>
<feature type="region of interest" description="Disordered" evidence="5">
    <location>
        <begin position="50"/>
        <end position="164"/>
    </location>
</feature>
<feature type="short sequence motif" description="GDS motif" evidence="10">
    <location>
        <begin position="242"/>
        <end position="244"/>
    </location>
</feature>
<feature type="short sequence motif" description="DXXH motif" evidence="10">
    <location>
        <begin position="492"/>
        <end position="495"/>
    </location>
</feature>
<feature type="compositionally biased region" description="Gly residues" evidence="5">
    <location>
        <begin position="53"/>
        <end position="69"/>
    </location>
</feature>
<feature type="compositionally biased region" description="Polar residues" evidence="5">
    <location>
        <begin position="123"/>
        <end position="139"/>
    </location>
</feature>
<feature type="compositionally biased region" description="Low complexity" evidence="5">
    <location>
        <begin position="146"/>
        <end position="155"/>
    </location>
</feature>
<feature type="active site" description="Nucleophile" evidence="2">
    <location>
        <position position="244"/>
    </location>
</feature>
<feature type="active site" description="Proton donor" evidence="2">
    <location>
        <position position="492"/>
    </location>
</feature>
<feature type="active site" description="Proton acceptor" evidence="2">
    <location>
        <position position="495"/>
    </location>
</feature>
<feature type="glycosylation site" description="N-linked (GlcNAc...) asparagine" evidence="4">
    <location>
        <position position="271"/>
    </location>
</feature>
<feature type="glycosylation site" description="N-linked (GlcNAc...) asparagine" evidence="4">
    <location>
        <position position="283"/>
    </location>
</feature>
<feature type="glycosylation site" description="N-linked (GlcNAc...) asparagine" evidence="4">
    <location>
        <position position="422"/>
    </location>
</feature>
<feature type="glycosylation site" description="N-linked (GlcNAc...) asparagine" evidence="4">
    <location>
        <position position="455"/>
    </location>
</feature>
<feature type="disulfide bond" evidence="2">
    <location>
        <begin position="168"/>
        <end position="219"/>
    </location>
</feature>
<feature type="disulfide bond" evidence="2">
    <location>
        <begin position="190"/>
        <end position="255"/>
    </location>
</feature>
<feature type="disulfide bond" evidence="2">
    <location>
        <begin position="199"/>
        <end position="497"/>
    </location>
</feature>
<feature type="disulfide bond" evidence="2">
    <location>
        <begin position="413"/>
        <end position="493"/>
    </location>
</feature>
<gene>
    <name evidence="8" type="primary">XOAT5</name>
    <name evidence="7" type="synonym">TBL13</name>
    <name evidence="12" type="ordered locus">Os05g0354400</name>
    <name evidence="9" type="ordered locus">LOC_Os05g28630</name>
    <name evidence="11" type="ORF">OJ1537_B05.7</name>
</gene>
<dbReference type="EC" id="2.3.1.-" evidence="6"/>
<dbReference type="EMBL" id="MH037019">
    <property type="protein sequence ID" value="AVR54509.1"/>
    <property type="molecule type" value="mRNA"/>
</dbReference>
<dbReference type="EMBL" id="AC104281">
    <property type="protein sequence ID" value="AAV43889.1"/>
    <property type="status" value="ALT_SEQ"/>
    <property type="molecule type" value="Genomic_DNA"/>
</dbReference>
<dbReference type="EMBL" id="AP008211">
    <property type="protein sequence ID" value="BAF17200.1"/>
    <property type="status" value="ALT_SEQ"/>
    <property type="molecule type" value="Genomic_DNA"/>
</dbReference>
<dbReference type="EMBL" id="AP014961">
    <property type="protein sequence ID" value="BAS93559.1"/>
    <property type="molecule type" value="Genomic_DNA"/>
</dbReference>
<dbReference type="RefSeq" id="XP_015640655.1">
    <property type="nucleotide sequence ID" value="XM_015785169.1"/>
</dbReference>
<dbReference type="SMR" id="A0A0P0WL81"/>
<dbReference type="FunCoup" id="A0A0P0WL81">
    <property type="interactions" value="3"/>
</dbReference>
<dbReference type="GlyCosmos" id="A0A0P0WL81">
    <property type="glycosylation" value="4 sites, No reported glycans"/>
</dbReference>
<dbReference type="PaxDb" id="39947-A0A0P0WL81"/>
<dbReference type="EnsemblPlants" id="Os05t0354400-01">
    <property type="protein sequence ID" value="Os05t0354400-01"/>
    <property type="gene ID" value="Os05g0354400"/>
</dbReference>
<dbReference type="Gramene" id="Os05t0354400-01">
    <property type="protein sequence ID" value="Os05t0354400-01"/>
    <property type="gene ID" value="Os05g0354400"/>
</dbReference>
<dbReference type="KEGG" id="dosa:Os05g0354400"/>
<dbReference type="eggNOG" id="ENOG502QUBK">
    <property type="taxonomic scope" value="Eukaryota"/>
</dbReference>
<dbReference type="HOGENOM" id="CLU_020953_3_2_1"/>
<dbReference type="InParanoid" id="A0A0P0WL81"/>
<dbReference type="OMA" id="MICFVQS"/>
<dbReference type="OrthoDB" id="1932925at2759"/>
<dbReference type="Proteomes" id="UP000000763">
    <property type="component" value="Chromosome 5"/>
</dbReference>
<dbReference type="Proteomes" id="UP000059680">
    <property type="component" value="Chromosome 5"/>
</dbReference>
<dbReference type="ExpressionAtlas" id="A0A0P0WL81">
    <property type="expression patterns" value="baseline and differential"/>
</dbReference>
<dbReference type="GO" id="GO:0005794">
    <property type="term" value="C:Golgi apparatus"/>
    <property type="evidence" value="ECO:0000318"/>
    <property type="project" value="GO_Central"/>
</dbReference>
<dbReference type="GO" id="GO:0000139">
    <property type="term" value="C:Golgi membrane"/>
    <property type="evidence" value="ECO:0000250"/>
    <property type="project" value="UniProtKB"/>
</dbReference>
<dbReference type="GO" id="GO:0016413">
    <property type="term" value="F:O-acetyltransferase activity"/>
    <property type="evidence" value="ECO:0000318"/>
    <property type="project" value="GO_Central"/>
</dbReference>
<dbReference type="GO" id="GO:1990538">
    <property type="term" value="F:xylan O-acetyltransferase activity"/>
    <property type="evidence" value="ECO:0000314"/>
    <property type="project" value="UniProtKB"/>
</dbReference>
<dbReference type="GO" id="GO:1990937">
    <property type="term" value="P:xylan acetylation"/>
    <property type="evidence" value="ECO:0000314"/>
    <property type="project" value="UniProtKB"/>
</dbReference>
<dbReference type="InterPro" id="IPR029962">
    <property type="entry name" value="TBL"/>
</dbReference>
<dbReference type="InterPro" id="IPR026057">
    <property type="entry name" value="TBL_C"/>
</dbReference>
<dbReference type="InterPro" id="IPR025846">
    <property type="entry name" value="TBL_N"/>
</dbReference>
<dbReference type="PANTHER" id="PTHR32285">
    <property type="entry name" value="PROTEIN TRICHOME BIREFRINGENCE-LIKE 9-RELATED"/>
    <property type="match status" value="1"/>
</dbReference>
<dbReference type="PANTHER" id="PTHR32285:SF37">
    <property type="entry name" value="XYLAN O-ACETYLTRANSFERASE 5"/>
    <property type="match status" value="1"/>
</dbReference>
<dbReference type="Pfam" id="PF13839">
    <property type="entry name" value="PC-Esterase"/>
    <property type="match status" value="1"/>
</dbReference>
<dbReference type="Pfam" id="PF14416">
    <property type="entry name" value="PMR5N"/>
    <property type="match status" value="1"/>
</dbReference>
<comment type="function">
    <text evidence="2 6">Xylan acetyltransferase required for 2-O- and 3-O-monoacetylation of xylosyl residues in xylan (PubMed:29569182). Catalyzes the 2-O-acetylation of xylan, followed by nonenzymatic acetyl migration to the O-3 position, resulting in products that are monoacetylated at both O-2 and O-3 positions (By similarity).</text>
</comment>
<comment type="biophysicochemical properties">
    <kinetics>
        <KM evidence="6">350 uM for xylohexaose</KM>
        <Vmax evidence="6">71.3 pmol/min/mg enzyme with xylohexaose as substrate</Vmax>
    </kinetics>
</comment>
<comment type="subcellular location">
    <subcellularLocation>
        <location evidence="1">Golgi apparatus membrane</location>
        <topology evidence="3">Single-pass type II membrane protein</topology>
    </subcellularLocation>
</comment>
<comment type="tissue specificity">
    <text evidence="6">Expressed in roots, leaves and stems.</text>
</comment>
<comment type="similarity">
    <text evidence="9">Belongs to the PC-esterase family. TBL subfamily.</text>
</comment>
<comment type="sequence caution" evidence="9">
    <conflict type="erroneous gene model prediction">
        <sequence resource="EMBL-CDS" id="AAV43889"/>
    </conflict>
</comment>
<comment type="sequence caution" evidence="9">
    <conflict type="erroneous gene model prediction">
        <sequence resource="EMBL-CDS" id="BAF17200"/>
    </conflict>
</comment>